<keyword id="KW-0028">Amino-acid biosynthesis</keyword>
<keyword id="KW-0057">Aromatic amino acid biosynthesis</keyword>
<keyword id="KW-0067">ATP-binding</keyword>
<keyword id="KW-0963">Cytoplasm</keyword>
<keyword id="KW-0418">Kinase</keyword>
<keyword id="KW-0456">Lyase</keyword>
<keyword id="KW-0479">Metal-binding</keyword>
<keyword id="KW-0511">Multifunctional enzyme</keyword>
<keyword id="KW-0521">NADP</keyword>
<keyword id="KW-0547">Nucleotide-binding</keyword>
<keyword id="KW-0560">Oxidoreductase</keyword>
<keyword id="KW-1185">Reference proteome</keyword>
<keyword id="KW-0808">Transferase</keyword>
<keyword id="KW-0862">Zinc</keyword>
<dbReference type="EC" id="4.2.3.4" evidence="1"/>
<dbReference type="EC" id="2.5.1.19" evidence="1"/>
<dbReference type="EC" id="2.7.1.71" evidence="1"/>
<dbReference type="EC" id="4.2.1.10" evidence="1"/>
<dbReference type="EC" id="1.1.1.25" evidence="1"/>
<dbReference type="EMBL" id="X06077">
    <property type="protein sequence ID" value="CAA29458.1"/>
    <property type="molecule type" value="Genomic_DNA"/>
</dbReference>
<dbReference type="EMBL" id="Z48179">
    <property type="protein sequence ID" value="CAA88208.1"/>
    <property type="molecule type" value="Genomic_DNA"/>
</dbReference>
<dbReference type="EMBL" id="X13802">
    <property type="protein sequence ID" value="CAA32036.1"/>
    <property type="molecule type" value="Genomic_DNA"/>
</dbReference>
<dbReference type="EMBL" id="X13803">
    <property type="protein sequence ID" value="CAA32037.1"/>
    <property type="molecule type" value="Genomic_DNA"/>
</dbReference>
<dbReference type="EMBL" id="BK006938">
    <property type="protein sequence ID" value="DAA11973.1"/>
    <property type="molecule type" value="Genomic_DNA"/>
</dbReference>
<dbReference type="PIR" id="A32519">
    <property type="entry name" value="BVBYA1"/>
</dbReference>
<dbReference type="RefSeq" id="NP_010412.1">
    <property type="nucleotide sequence ID" value="NM_001180435.1"/>
</dbReference>
<dbReference type="SMR" id="P08566"/>
<dbReference type="BioGRID" id="32183">
    <property type="interactions" value="658"/>
</dbReference>
<dbReference type="DIP" id="DIP-2611N"/>
<dbReference type="FunCoup" id="P08566">
    <property type="interactions" value="598"/>
</dbReference>
<dbReference type="IntAct" id="P08566">
    <property type="interactions" value="63"/>
</dbReference>
<dbReference type="MINT" id="P08566"/>
<dbReference type="STRING" id="4932.YDR127W"/>
<dbReference type="iPTMnet" id="P08566"/>
<dbReference type="PaxDb" id="4932-YDR127W"/>
<dbReference type="PeptideAtlas" id="P08566"/>
<dbReference type="EnsemblFungi" id="YDR127W_mRNA">
    <property type="protein sequence ID" value="YDR127W"/>
    <property type="gene ID" value="YDR127W"/>
</dbReference>
<dbReference type="GeneID" id="851705"/>
<dbReference type="KEGG" id="sce:YDR127W"/>
<dbReference type="AGR" id="SGD:S000002534"/>
<dbReference type="SGD" id="S000002534">
    <property type="gene designation" value="ARO1"/>
</dbReference>
<dbReference type="VEuPathDB" id="FungiDB:YDR127W"/>
<dbReference type="eggNOG" id="KOG0692">
    <property type="taxonomic scope" value="Eukaryota"/>
</dbReference>
<dbReference type="HOGENOM" id="CLU_001201_1_2_1"/>
<dbReference type="InParanoid" id="P08566"/>
<dbReference type="OMA" id="SWANMSW"/>
<dbReference type="OrthoDB" id="197068at2759"/>
<dbReference type="BioCyc" id="MetaCyc:YDR127W-MONOMER"/>
<dbReference type="BioCyc" id="YEAST:YDR127W-MONOMER"/>
<dbReference type="UniPathway" id="UPA00053">
    <property type="reaction ID" value="UER00085"/>
</dbReference>
<dbReference type="UniPathway" id="UPA00053">
    <property type="reaction ID" value="UER00086"/>
</dbReference>
<dbReference type="UniPathway" id="UPA00053">
    <property type="reaction ID" value="UER00087"/>
</dbReference>
<dbReference type="UniPathway" id="UPA00053">
    <property type="reaction ID" value="UER00088"/>
</dbReference>
<dbReference type="UniPathway" id="UPA00053">
    <property type="reaction ID" value="UER00089"/>
</dbReference>
<dbReference type="BioGRID-ORCS" id="851705">
    <property type="hits" value="7 hits in 10 CRISPR screens"/>
</dbReference>
<dbReference type="CD-CODE" id="E03F929F">
    <property type="entry name" value="Stress granule"/>
</dbReference>
<dbReference type="PRO" id="PR:P08566"/>
<dbReference type="Proteomes" id="UP000002311">
    <property type="component" value="Chromosome IV"/>
</dbReference>
<dbReference type="RNAct" id="P08566">
    <property type="molecule type" value="protein"/>
</dbReference>
<dbReference type="GO" id="GO:0005737">
    <property type="term" value="C:cytoplasm"/>
    <property type="evidence" value="ECO:0007005"/>
    <property type="project" value="SGD"/>
</dbReference>
<dbReference type="GO" id="GO:0003855">
    <property type="term" value="F:3-dehydroquinate dehydratase activity"/>
    <property type="evidence" value="ECO:0000314"/>
    <property type="project" value="SGD"/>
</dbReference>
<dbReference type="GO" id="GO:0003856">
    <property type="term" value="F:3-dehydroquinate synthase activity"/>
    <property type="evidence" value="ECO:0000314"/>
    <property type="project" value="SGD"/>
</dbReference>
<dbReference type="GO" id="GO:0003866">
    <property type="term" value="F:3-phosphoshikimate 1-carboxyvinyltransferase activity"/>
    <property type="evidence" value="ECO:0000314"/>
    <property type="project" value="SGD"/>
</dbReference>
<dbReference type="GO" id="GO:0005524">
    <property type="term" value="F:ATP binding"/>
    <property type="evidence" value="ECO:0007669"/>
    <property type="project" value="UniProtKB-UniRule"/>
</dbReference>
<dbReference type="GO" id="GO:0046872">
    <property type="term" value="F:metal ion binding"/>
    <property type="evidence" value="ECO:0007669"/>
    <property type="project" value="UniProtKB-UniRule"/>
</dbReference>
<dbReference type="GO" id="GO:0004764">
    <property type="term" value="F:shikimate 3-dehydrogenase (NADP+) activity"/>
    <property type="evidence" value="ECO:0000314"/>
    <property type="project" value="SGD"/>
</dbReference>
<dbReference type="GO" id="GO:0004765">
    <property type="term" value="F:shikimate kinase activity"/>
    <property type="evidence" value="ECO:0000314"/>
    <property type="project" value="SGD"/>
</dbReference>
<dbReference type="GO" id="GO:0008652">
    <property type="term" value="P:amino acid biosynthetic process"/>
    <property type="evidence" value="ECO:0007669"/>
    <property type="project" value="UniProtKB-KW"/>
</dbReference>
<dbReference type="GO" id="GO:0009073">
    <property type="term" value="P:aromatic amino acid family biosynthetic process"/>
    <property type="evidence" value="ECO:0007669"/>
    <property type="project" value="UniProtKB-UniRule"/>
</dbReference>
<dbReference type="GO" id="GO:0009423">
    <property type="term" value="P:chorismate biosynthetic process"/>
    <property type="evidence" value="ECO:0000318"/>
    <property type="project" value="GO_Central"/>
</dbReference>
<dbReference type="CDD" id="cd00502">
    <property type="entry name" value="DHQase_I"/>
    <property type="match status" value="1"/>
</dbReference>
<dbReference type="CDD" id="cd08195">
    <property type="entry name" value="DHQS"/>
    <property type="match status" value="1"/>
</dbReference>
<dbReference type="CDD" id="cd01556">
    <property type="entry name" value="EPSP_synthase"/>
    <property type="match status" value="1"/>
</dbReference>
<dbReference type="CDD" id="cd01065">
    <property type="entry name" value="NAD_bind_Shikimate_DH"/>
    <property type="match status" value="1"/>
</dbReference>
<dbReference type="CDD" id="cd00464">
    <property type="entry name" value="SK"/>
    <property type="match status" value="1"/>
</dbReference>
<dbReference type="FunFam" id="1.20.1090.10:FF:000007">
    <property type="entry name" value="Pentafunctional AROM polypeptide"/>
    <property type="match status" value="1"/>
</dbReference>
<dbReference type="FunFam" id="3.20.20.70:FF:000135">
    <property type="entry name" value="Pentafunctional AROM polypeptide"/>
    <property type="match status" value="1"/>
</dbReference>
<dbReference type="FunFam" id="3.40.50.10860:FF:000015">
    <property type="entry name" value="Pentafunctional AROM polypeptide"/>
    <property type="match status" value="1"/>
</dbReference>
<dbReference type="FunFam" id="3.40.50.1970:FF:000007">
    <property type="entry name" value="Pentafunctional AROM polypeptide"/>
    <property type="match status" value="1"/>
</dbReference>
<dbReference type="FunFam" id="3.40.50.300:FF:001256">
    <property type="entry name" value="Pentafunctional AROM polypeptide"/>
    <property type="match status" value="1"/>
</dbReference>
<dbReference type="FunFam" id="3.40.50.720:FF:000484">
    <property type="entry name" value="Pentafunctional AROM polypeptide"/>
    <property type="match status" value="1"/>
</dbReference>
<dbReference type="FunFam" id="3.65.10.10:FF:000007">
    <property type="entry name" value="Pentafunctional AROM polypeptide"/>
    <property type="match status" value="1"/>
</dbReference>
<dbReference type="FunFam" id="3.65.10.10:FF:000008">
    <property type="entry name" value="Pentafunctional AROM polypeptide"/>
    <property type="match status" value="1"/>
</dbReference>
<dbReference type="Gene3D" id="3.40.50.1970">
    <property type="match status" value="1"/>
</dbReference>
<dbReference type="Gene3D" id="3.20.20.70">
    <property type="entry name" value="Aldolase class I"/>
    <property type="match status" value="1"/>
</dbReference>
<dbReference type="Gene3D" id="1.20.1090.10">
    <property type="entry name" value="Dehydroquinate synthase-like - alpha domain"/>
    <property type="match status" value="1"/>
</dbReference>
<dbReference type="Gene3D" id="3.65.10.10">
    <property type="entry name" value="Enolpyruvate transferase domain"/>
    <property type="match status" value="2"/>
</dbReference>
<dbReference type="Gene3D" id="3.40.50.10860">
    <property type="entry name" value="Leucine Dehydrogenase, chain A, domain 1"/>
    <property type="match status" value="1"/>
</dbReference>
<dbReference type="Gene3D" id="3.40.50.720">
    <property type="entry name" value="NAD(P)-binding Rossmann-like Domain"/>
    <property type="match status" value="1"/>
</dbReference>
<dbReference type="Gene3D" id="3.40.50.300">
    <property type="entry name" value="P-loop containing nucleotide triphosphate hydrolases"/>
    <property type="match status" value="1"/>
</dbReference>
<dbReference type="HAMAP" id="MF_00210">
    <property type="entry name" value="EPSP_synth"/>
    <property type="match status" value="1"/>
</dbReference>
<dbReference type="HAMAP" id="MF_03143">
    <property type="entry name" value="Pentafunct_AroM"/>
    <property type="match status" value="1"/>
</dbReference>
<dbReference type="HAMAP" id="MF_00109">
    <property type="entry name" value="Shikimate_kinase"/>
    <property type="match status" value="1"/>
</dbReference>
<dbReference type="InterPro" id="IPR018508">
    <property type="entry name" value="3-dehydroquinate_DH_AS"/>
</dbReference>
<dbReference type="InterPro" id="IPR013785">
    <property type="entry name" value="Aldolase_TIM"/>
</dbReference>
<dbReference type="InterPro" id="IPR046346">
    <property type="entry name" value="Aminoacid_DH-like_N_sf"/>
</dbReference>
<dbReference type="InterPro" id="IPR016037">
    <property type="entry name" value="DHQ_synth_AroB"/>
</dbReference>
<dbReference type="InterPro" id="IPR030960">
    <property type="entry name" value="DHQS/DOIS_N"/>
</dbReference>
<dbReference type="InterPro" id="IPR056179">
    <property type="entry name" value="DHQS_C"/>
</dbReference>
<dbReference type="InterPro" id="IPR001381">
    <property type="entry name" value="DHquinase_I"/>
</dbReference>
<dbReference type="InterPro" id="IPR001986">
    <property type="entry name" value="Enolpyruvate_Tfrase_dom"/>
</dbReference>
<dbReference type="InterPro" id="IPR036968">
    <property type="entry name" value="Enolpyruvate_Tfrase_sf"/>
</dbReference>
<dbReference type="InterPro" id="IPR006264">
    <property type="entry name" value="EPSP_synthase"/>
</dbReference>
<dbReference type="InterPro" id="IPR023193">
    <property type="entry name" value="EPSP_synthase_CS"/>
</dbReference>
<dbReference type="InterPro" id="IPR036291">
    <property type="entry name" value="NAD(P)-bd_dom_sf"/>
</dbReference>
<dbReference type="InterPro" id="IPR027417">
    <property type="entry name" value="P-loop_NTPase"/>
</dbReference>
<dbReference type="InterPro" id="IPR008289">
    <property type="entry name" value="Pentafunct_AroM"/>
</dbReference>
<dbReference type="InterPro" id="IPR013792">
    <property type="entry name" value="RNA3'P_cycl/enolpyr_Trfase_a/b"/>
</dbReference>
<dbReference type="InterPro" id="IPR041121">
    <property type="entry name" value="SDH_C"/>
</dbReference>
<dbReference type="InterPro" id="IPR031322">
    <property type="entry name" value="Shikimate/glucono_kinase"/>
</dbReference>
<dbReference type="InterPro" id="IPR013708">
    <property type="entry name" value="Shikimate_DH-bd_N"/>
</dbReference>
<dbReference type="InterPro" id="IPR010110">
    <property type="entry name" value="Shikimate_DH_AroM-type"/>
</dbReference>
<dbReference type="InterPro" id="IPR000623">
    <property type="entry name" value="Shikimate_kinase/TSH1"/>
</dbReference>
<dbReference type="InterPro" id="IPR023000">
    <property type="entry name" value="Shikimate_kinase_CS"/>
</dbReference>
<dbReference type="InterPro" id="IPR006151">
    <property type="entry name" value="Shikm_DH/Glu-tRNA_Rdtase"/>
</dbReference>
<dbReference type="NCBIfam" id="TIGR01356">
    <property type="entry name" value="aroA"/>
    <property type="match status" value="1"/>
</dbReference>
<dbReference type="NCBIfam" id="TIGR01357">
    <property type="entry name" value="aroB"/>
    <property type="match status" value="1"/>
</dbReference>
<dbReference type="NCBIfam" id="TIGR01093">
    <property type="entry name" value="aroD"/>
    <property type="match status" value="1"/>
</dbReference>
<dbReference type="NCBIfam" id="TIGR01809">
    <property type="entry name" value="Shik-DH-AROM"/>
    <property type="match status" value="1"/>
</dbReference>
<dbReference type="PANTHER" id="PTHR21090">
    <property type="entry name" value="AROM/DEHYDROQUINATE SYNTHASE"/>
    <property type="match status" value="1"/>
</dbReference>
<dbReference type="PANTHER" id="PTHR21090:SF5">
    <property type="entry name" value="PENTAFUNCTIONAL AROM POLYPEPTIDE"/>
    <property type="match status" value="1"/>
</dbReference>
<dbReference type="Pfam" id="PF01761">
    <property type="entry name" value="DHQ_synthase"/>
    <property type="match status" value="1"/>
</dbReference>
<dbReference type="Pfam" id="PF24621">
    <property type="entry name" value="DHQS_C"/>
    <property type="match status" value="1"/>
</dbReference>
<dbReference type="Pfam" id="PF01487">
    <property type="entry name" value="DHquinase_I"/>
    <property type="match status" value="1"/>
</dbReference>
<dbReference type="Pfam" id="PF00275">
    <property type="entry name" value="EPSP_synthase"/>
    <property type="match status" value="1"/>
</dbReference>
<dbReference type="Pfam" id="PF18317">
    <property type="entry name" value="SDH_C"/>
    <property type="match status" value="1"/>
</dbReference>
<dbReference type="Pfam" id="PF01488">
    <property type="entry name" value="Shikimate_DH"/>
    <property type="match status" value="1"/>
</dbReference>
<dbReference type="Pfam" id="PF08501">
    <property type="entry name" value="Shikimate_dh_N"/>
    <property type="match status" value="1"/>
</dbReference>
<dbReference type="Pfam" id="PF01202">
    <property type="entry name" value="SKI"/>
    <property type="match status" value="1"/>
</dbReference>
<dbReference type="PIRSF" id="PIRSF000514">
    <property type="entry name" value="Pentafunct_AroM"/>
    <property type="match status" value="1"/>
</dbReference>
<dbReference type="PRINTS" id="PR01100">
    <property type="entry name" value="SHIKIMTKNASE"/>
</dbReference>
<dbReference type="SUPFAM" id="SSF51569">
    <property type="entry name" value="Aldolase"/>
    <property type="match status" value="1"/>
</dbReference>
<dbReference type="SUPFAM" id="SSF53223">
    <property type="entry name" value="Aminoacid dehydrogenase-like, N-terminal domain"/>
    <property type="match status" value="1"/>
</dbReference>
<dbReference type="SUPFAM" id="SSF56796">
    <property type="entry name" value="Dehydroquinate synthase-like"/>
    <property type="match status" value="1"/>
</dbReference>
<dbReference type="SUPFAM" id="SSF55205">
    <property type="entry name" value="EPT/RTPC-like"/>
    <property type="match status" value="1"/>
</dbReference>
<dbReference type="SUPFAM" id="SSF51735">
    <property type="entry name" value="NAD(P)-binding Rossmann-fold domains"/>
    <property type="match status" value="1"/>
</dbReference>
<dbReference type="SUPFAM" id="SSF52540">
    <property type="entry name" value="P-loop containing nucleoside triphosphate hydrolases"/>
    <property type="match status" value="1"/>
</dbReference>
<dbReference type="PROSITE" id="PS01028">
    <property type="entry name" value="DEHYDROQUINASE_I"/>
    <property type="match status" value="1"/>
</dbReference>
<dbReference type="PROSITE" id="PS00104">
    <property type="entry name" value="EPSP_SYNTHASE_1"/>
    <property type="match status" value="1"/>
</dbReference>
<dbReference type="PROSITE" id="PS00885">
    <property type="entry name" value="EPSP_SYNTHASE_2"/>
    <property type="match status" value="1"/>
</dbReference>
<dbReference type="PROSITE" id="PS01128">
    <property type="entry name" value="SHIKIMATE_KINASE"/>
    <property type="match status" value="1"/>
</dbReference>
<name>ARO1_YEAST</name>
<accession>P08566</accession>
<accession>D6VSB3</accession>
<gene>
    <name evidence="1" type="primary">ARO1</name>
    <name type="synonym">AROM</name>
    <name type="ordered locus">YDR127W</name>
    <name type="ORF">YD9302.02</name>
</gene>
<feature type="chain" id="PRO_0000140862" description="Pentafunctional AROM polypeptide">
    <location>
        <begin position="1"/>
        <end position="1588"/>
    </location>
</feature>
<feature type="region of interest" description="3-dehydroquinate synthase">
    <location>
        <begin position="1"/>
        <end position="392"/>
    </location>
</feature>
<feature type="region of interest" description="EPSP synthase">
    <location>
        <begin position="405"/>
        <end position="871"/>
    </location>
</feature>
<feature type="region of interest" description="Shikimate kinase">
    <location>
        <begin position="890"/>
        <end position="1080"/>
    </location>
</feature>
<feature type="region of interest" description="3-dehydroquinase">
    <location>
        <begin position="1081"/>
        <end position="1293"/>
    </location>
</feature>
<feature type="region of interest" description="Shikimate dehydrogenase">
    <location>
        <begin position="1306"/>
        <end position="1588"/>
    </location>
</feature>
<feature type="active site" description="Proton acceptor; for 3-dehydroquinate synthase activity" evidence="1">
    <location>
        <position position="268"/>
    </location>
</feature>
<feature type="active site" description="Proton acceptor; for 3-dehydroquinate synthase activity" evidence="1">
    <location>
        <position position="283"/>
    </location>
</feature>
<feature type="active site" description="For EPSP synthase activity" evidence="1">
    <location>
        <position position="853"/>
    </location>
</feature>
<feature type="active site" description="Proton acceptor; for 3-dehydroquinate dehydratase activity" evidence="1">
    <location>
        <position position="1198"/>
    </location>
</feature>
<feature type="active site" description="Schiff-base intermediate with substrate; for 3-dehydroquinate dehydratase activity" evidence="1">
    <location>
        <position position="1227"/>
    </location>
</feature>
<feature type="binding site" evidence="1">
    <location>
        <begin position="43"/>
        <end position="45"/>
    </location>
    <ligand>
        <name>NAD(+)</name>
        <dbReference type="ChEBI" id="CHEBI:57540"/>
    </ligand>
</feature>
<feature type="binding site" evidence="1">
    <location>
        <begin position="78"/>
        <end position="81"/>
    </location>
    <ligand>
        <name>NAD(+)</name>
        <dbReference type="ChEBI" id="CHEBI:57540"/>
    </ligand>
</feature>
<feature type="binding site" evidence="1">
    <location>
        <begin position="109"/>
        <end position="111"/>
    </location>
    <ligand>
        <name>NAD(+)</name>
        <dbReference type="ChEBI" id="CHEBI:57540"/>
    </ligand>
</feature>
<feature type="binding site" evidence="1">
    <location>
        <position position="114"/>
    </location>
    <ligand>
        <name>NAD(+)</name>
        <dbReference type="ChEBI" id="CHEBI:57540"/>
    </ligand>
</feature>
<feature type="binding site" evidence="1">
    <location>
        <position position="125"/>
    </location>
    <ligand>
        <name>7-phospho-2-dehydro-3-deoxy-D-arabino-heptonate</name>
        <dbReference type="ChEBI" id="CHEBI:58394"/>
    </ligand>
</feature>
<feature type="binding site" evidence="1">
    <location>
        <begin position="134"/>
        <end position="135"/>
    </location>
    <ligand>
        <name>NAD(+)</name>
        <dbReference type="ChEBI" id="CHEBI:57540"/>
    </ligand>
</feature>
<feature type="binding site" evidence="1">
    <location>
        <position position="141"/>
    </location>
    <ligand>
        <name>7-phospho-2-dehydro-3-deoxy-D-arabino-heptonate</name>
        <dbReference type="ChEBI" id="CHEBI:58394"/>
    </ligand>
</feature>
<feature type="binding site" evidence="1">
    <location>
        <position position="147"/>
    </location>
    <ligand>
        <name>7-phospho-2-dehydro-3-deoxy-D-arabino-heptonate</name>
        <dbReference type="ChEBI" id="CHEBI:58394"/>
    </ligand>
</feature>
<feature type="binding site" evidence="1">
    <location>
        <position position="156"/>
    </location>
    <ligand>
        <name>NAD(+)</name>
        <dbReference type="ChEBI" id="CHEBI:57540"/>
    </ligand>
</feature>
<feature type="binding site" evidence="1">
    <location>
        <position position="157"/>
    </location>
    <ligand>
        <name>7-phospho-2-dehydro-3-deoxy-D-arabino-heptonate</name>
        <dbReference type="ChEBI" id="CHEBI:58394"/>
    </ligand>
</feature>
<feature type="binding site" evidence="1">
    <location>
        <begin position="174"/>
        <end position="177"/>
    </location>
    <ligand>
        <name>NAD(+)</name>
        <dbReference type="ChEBI" id="CHEBI:57540"/>
    </ligand>
</feature>
<feature type="binding site" evidence="1">
    <location>
        <position position="185"/>
    </location>
    <ligand>
        <name>NAD(+)</name>
        <dbReference type="ChEBI" id="CHEBI:57540"/>
    </ligand>
</feature>
<feature type="binding site" evidence="1">
    <location>
        <begin position="189"/>
        <end position="192"/>
    </location>
    <ligand>
        <name>7-phospho-2-dehydro-3-deoxy-D-arabino-heptonate</name>
        <dbReference type="ChEBI" id="CHEBI:58394"/>
    </ligand>
</feature>
<feature type="binding site" evidence="1">
    <location>
        <position position="189"/>
    </location>
    <ligand>
        <name>Zn(2+)</name>
        <dbReference type="ChEBI" id="CHEBI:29105"/>
        <note>catalytic</note>
    </ligand>
</feature>
<feature type="binding site" evidence="1">
    <location>
        <position position="258"/>
    </location>
    <ligand>
        <name>7-phospho-2-dehydro-3-deoxy-D-arabino-heptonate</name>
        <dbReference type="ChEBI" id="CHEBI:58394"/>
    </ligand>
</feature>
<feature type="binding site" evidence="1">
    <location>
        <begin position="272"/>
        <end position="276"/>
    </location>
    <ligand>
        <name>7-phospho-2-dehydro-3-deoxy-D-arabino-heptonate</name>
        <dbReference type="ChEBI" id="CHEBI:58394"/>
    </ligand>
</feature>
<feature type="binding site" evidence="1">
    <location>
        <position position="279"/>
    </location>
    <ligand>
        <name>7-phospho-2-dehydro-3-deoxy-D-arabino-heptonate</name>
        <dbReference type="ChEBI" id="CHEBI:58394"/>
    </ligand>
</feature>
<feature type="binding site" evidence="1">
    <location>
        <position position="279"/>
    </location>
    <ligand>
        <name>Zn(2+)</name>
        <dbReference type="ChEBI" id="CHEBI:29105"/>
        <note>catalytic</note>
    </ligand>
</feature>
<feature type="binding site" evidence="1">
    <location>
        <position position="295"/>
    </location>
    <ligand>
        <name>7-phospho-2-dehydro-3-deoxy-D-arabino-heptonate</name>
        <dbReference type="ChEBI" id="CHEBI:58394"/>
    </ligand>
</feature>
<feature type="binding site" evidence="1">
    <location>
        <position position="295"/>
    </location>
    <ligand>
        <name>Zn(2+)</name>
        <dbReference type="ChEBI" id="CHEBI:29105"/>
        <note>catalytic</note>
    </ligand>
</feature>
<feature type="binding site" evidence="1">
    <location>
        <position position="364"/>
    </location>
    <ligand>
        <name>7-phospho-2-dehydro-3-deoxy-D-arabino-heptonate</name>
        <dbReference type="ChEBI" id="CHEBI:58394"/>
    </ligand>
</feature>
<feature type="binding site" evidence="1">
    <location>
        <begin position="895"/>
        <end position="902"/>
    </location>
    <ligand>
        <name>ATP</name>
        <dbReference type="ChEBI" id="CHEBI:30616"/>
    </ligand>
</feature>
<protein>
    <recommendedName>
        <fullName evidence="1">Pentafunctional AROM polypeptide</fullName>
    </recommendedName>
    <domain>
        <recommendedName>
            <fullName evidence="1">3-dehydroquinate synthase</fullName>
            <shortName evidence="1">DHQS</shortName>
            <ecNumber evidence="1">4.2.3.4</ecNumber>
        </recommendedName>
    </domain>
    <domain>
        <recommendedName>
            <fullName evidence="1">3-phosphoshikimate 1-carboxyvinyltransferase</fullName>
            <ecNumber evidence="1">2.5.1.19</ecNumber>
        </recommendedName>
        <alternativeName>
            <fullName evidence="1">5-enolpyruvylshikimate-3-phosphate synthase</fullName>
            <shortName evidence="1">EPSP synthase</shortName>
            <shortName evidence="1">EPSPS</shortName>
        </alternativeName>
    </domain>
    <domain>
        <recommendedName>
            <fullName evidence="1">Shikimate kinase</fullName>
            <shortName evidence="1">SK</shortName>
            <ecNumber evidence="1">2.7.1.71</ecNumber>
        </recommendedName>
    </domain>
    <domain>
        <recommendedName>
            <fullName evidence="1">3-dehydroquinate dehydratase</fullName>
            <shortName evidence="1">3-dehydroquinase</shortName>
            <ecNumber evidence="1">4.2.1.10</ecNumber>
        </recommendedName>
    </domain>
    <domain>
        <recommendedName>
            <fullName evidence="1">Shikimate dehydrogenase</fullName>
            <ecNumber evidence="1">1.1.1.25</ecNumber>
        </recommendedName>
    </domain>
</protein>
<organism>
    <name type="scientific">Saccharomyces cerevisiae (strain ATCC 204508 / S288c)</name>
    <name type="common">Baker's yeast</name>
    <dbReference type="NCBI Taxonomy" id="559292"/>
    <lineage>
        <taxon>Eukaryota</taxon>
        <taxon>Fungi</taxon>
        <taxon>Dikarya</taxon>
        <taxon>Ascomycota</taxon>
        <taxon>Saccharomycotina</taxon>
        <taxon>Saccharomycetes</taxon>
        <taxon>Saccharomycetales</taxon>
        <taxon>Saccharomycetaceae</taxon>
        <taxon>Saccharomyces</taxon>
    </lineage>
</organism>
<reference key="1">
    <citation type="journal article" date="1987" name="Biochem. J.">
        <title>The pentafunctional arom enzyme of Saccharomyces cerevisiae is a mosaic of monofunctional domains.</title>
        <authorList>
            <person name="Duncan K."/>
            <person name="Edwards R.M."/>
            <person name="Coggins J.R."/>
        </authorList>
    </citation>
    <scope>NUCLEOTIDE SEQUENCE [GENOMIC DNA]</scope>
</reference>
<reference key="2">
    <citation type="journal article" date="1997" name="Nature">
        <title>The nucleotide sequence of Saccharomyces cerevisiae chromosome IV.</title>
        <authorList>
            <person name="Jacq C."/>
            <person name="Alt-Moerbe J."/>
            <person name="Andre B."/>
            <person name="Arnold W."/>
            <person name="Bahr A."/>
            <person name="Ballesta J.P.G."/>
            <person name="Bargues M."/>
            <person name="Baron L."/>
            <person name="Becker A."/>
            <person name="Biteau N."/>
            <person name="Bloecker H."/>
            <person name="Blugeon C."/>
            <person name="Boskovic J."/>
            <person name="Brandt P."/>
            <person name="Brueckner M."/>
            <person name="Buitrago M.J."/>
            <person name="Coster F."/>
            <person name="Delaveau T."/>
            <person name="del Rey F."/>
            <person name="Dujon B."/>
            <person name="Eide L.G."/>
            <person name="Garcia-Cantalejo J.M."/>
            <person name="Goffeau A."/>
            <person name="Gomez-Peris A."/>
            <person name="Granotier C."/>
            <person name="Hanemann V."/>
            <person name="Hankeln T."/>
            <person name="Hoheisel J.D."/>
            <person name="Jaeger W."/>
            <person name="Jimenez A."/>
            <person name="Jonniaux J.-L."/>
            <person name="Kraemer C."/>
            <person name="Kuester H."/>
            <person name="Laamanen P."/>
            <person name="Legros Y."/>
            <person name="Louis E.J."/>
            <person name="Moeller-Rieker S."/>
            <person name="Monnet A."/>
            <person name="Moro M."/>
            <person name="Mueller-Auer S."/>
            <person name="Nussbaumer B."/>
            <person name="Paricio N."/>
            <person name="Paulin L."/>
            <person name="Perea J."/>
            <person name="Perez-Alonso M."/>
            <person name="Perez-Ortin J.E."/>
            <person name="Pohl T.M."/>
            <person name="Prydz H."/>
            <person name="Purnelle B."/>
            <person name="Rasmussen S.W."/>
            <person name="Remacha M.A."/>
            <person name="Revuelta J.L."/>
            <person name="Rieger M."/>
            <person name="Salom D."/>
            <person name="Saluz H.P."/>
            <person name="Saiz J.E."/>
            <person name="Saren A.-M."/>
            <person name="Schaefer M."/>
            <person name="Scharfe M."/>
            <person name="Schmidt E.R."/>
            <person name="Schneider C."/>
            <person name="Scholler P."/>
            <person name="Schwarz S."/>
            <person name="Soler-Mira A."/>
            <person name="Urrestarazu L.A."/>
            <person name="Verhasselt P."/>
            <person name="Vissers S."/>
            <person name="Voet M."/>
            <person name="Volckaert G."/>
            <person name="Wagner G."/>
            <person name="Wambutt R."/>
            <person name="Wedler E."/>
            <person name="Wedler H."/>
            <person name="Woelfl S."/>
            <person name="Harris D.E."/>
            <person name="Bowman S."/>
            <person name="Brown D."/>
            <person name="Churcher C.M."/>
            <person name="Connor R."/>
            <person name="Dedman K."/>
            <person name="Gentles S."/>
            <person name="Hamlin N."/>
            <person name="Hunt S."/>
            <person name="Jones L."/>
            <person name="McDonald S."/>
            <person name="Murphy L.D."/>
            <person name="Niblett D."/>
            <person name="Odell C."/>
            <person name="Oliver K."/>
            <person name="Rajandream M.A."/>
            <person name="Richards C."/>
            <person name="Shore L."/>
            <person name="Walsh S.V."/>
            <person name="Barrell B.G."/>
            <person name="Dietrich F.S."/>
            <person name="Mulligan J.T."/>
            <person name="Allen E."/>
            <person name="Araujo R."/>
            <person name="Aviles E."/>
            <person name="Berno A."/>
            <person name="Carpenter J."/>
            <person name="Chen E."/>
            <person name="Cherry J.M."/>
            <person name="Chung E."/>
            <person name="Duncan M."/>
            <person name="Hunicke-Smith S."/>
            <person name="Hyman R.W."/>
            <person name="Komp C."/>
            <person name="Lashkari D."/>
            <person name="Lew H."/>
            <person name="Lin D."/>
            <person name="Mosedale D."/>
            <person name="Nakahara K."/>
            <person name="Namath A."/>
            <person name="Oefner P."/>
            <person name="Oh C."/>
            <person name="Petel F.X."/>
            <person name="Roberts D."/>
            <person name="Schramm S."/>
            <person name="Schroeder M."/>
            <person name="Shogren T."/>
            <person name="Shroff N."/>
            <person name="Winant A."/>
            <person name="Yelton M.A."/>
            <person name="Botstein D."/>
            <person name="Davis R.W."/>
            <person name="Johnston M."/>
            <person name="Andrews S."/>
            <person name="Brinkman R."/>
            <person name="Cooper J."/>
            <person name="Ding H."/>
            <person name="Du Z."/>
            <person name="Favello A."/>
            <person name="Fulton L."/>
            <person name="Gattung S."/>
            <person name="Greco T."/>
            <person name="Hallsworth K."/>
            <person name="Hawkins J."/>
            <person name="Hillier L.W."/>
            <person name="Jier M."/>
            <person name="Johnson D."/>
            <person name="Johnston L."/>
            <person name="Kirsten J."/>
            <person name="Kucaba T."/>
            <person name="Langston Y."/>
            <person name="Latreille P."/>
            <person name="Le T."/>
            <person name="Mardis E."/>
            <person name="Menezes S."/>
            <person name="Miller N."/>
            <person name="Nhan M."/>
            <person name="Pauley A."/>
            <person name="Peluso D."/>
            <person name="Rifkin L."/>
            <person name="Riles L."/>
            <person name="Taich A."/>
            <person name="Trevaskis E."/>
            <person name="Vignati D."/>
            <person name="Wilcox L."/>
            <person name="Wohldman P."/>
            <person name="Vaudin M."/>
            <person name="Wilson R."/>
            <person name="Waterston R."/>
            <person name="Albermann K."/>
            <person name="Hani J."/>
            <person name="Heumann K."/>
            <person name="Kleine K."/>
            <person name="Mewes H.-W."/>
            <person name="Zollner A."/>
            <person name="Zaccaria P."/>
        </authorList>
    </citation>
    <scope>NUCLEOTIDE SEQUENCE [LARGE SCALE GENOMIC DNA]</scope>
    <source>
        <strain>ATCC 204508 / S288c</strain>
    </source>
</reference>
<reference key="3">
    <citation type="journal article" date="2014" name="G3 (Bethesda)">
        <title>The reference genome sequence of Saccharomyces cerevisiae: Then and now.</title>
        <authorList>
            <person name="Engel S.R."/>
            <person name="Dietrich F.S."/>
            <person name="Fisk D.G."/>
            <person name="Binkley G."/>
            <person name="Balakrishnan R."/>
            <person name="Costanzo M.C."/>
            <person name="Dwight S.S."/>
            <person name="Hitz B.C."/>
            <person name="Karra K."/>
            <person name="Nash R.S."/>
            <person name="Weng S."/>
            <person name="Wong E.D."/>
            <person name="Lloyd P."/>
            <person name="Skrzypek M.S."/>
            <person name="Miyasato S.R."/>
            <person name="Simison M."/>
            <person name="Cherry J.M."/>
        </authorList>
    </citation>
    <scope>GENOME REANNOTATION</scope>
    <source>
        <strain>ATCC 204508 / S288c</strain>
    </source>
</reference>
<reference key="4">
    <citation type="journal article" date="1988" name="FEBS Lett.">
        <title>The Saccharomyces cerevisiae ARO1 gene. An example of the co-ordinate regulation of five enzymes on a single biosynthetic pathway.</title>
        <authorList>
            <person name="Duncan K."/>
            <person name="Edwards R.M."/>
            <person name="Coggins J.R."/>
        </authorList>
    </citation>
    <scope>NUCLEOTIDE SEQUENCE [GENOMIC DNA] OF 1-44 AND 1557-1588</scope>
</reference>
<reference key="5">
    <citation type="journal article" date="2003" name="Nature">
        <title>Global analysis of protein expression in yeast.</title>
        <authorList>
            <person name="Ghaemmaghami S."/>
            <person name="Huh W.-K."/>
            <person name="Bower K."/>
            <person name="Howson R.W."/>
            <person name="Belle A."/>
            <person name="Dephoure N."/>
            <person name="O'Shea E.K."/>
            <person name="Weissman J.S."/>
        </authorList>
    </citation>
    <scope>LEVEL OF PROTEIN EXPRESSION [LARGE SCALE ANALYSIS]</scope>
</reference>
<proteinExistence type="evidence at protein level"/>
<sequence length="1588" mass="174755">MVQLAKVPILGNDIIHVGYNIHDHLVETIIKHCPSSTYVICNDTNLSKVPYYQQLVLEFKASLPEGSRLLTYVVKPGETSKSRETKAQLEDYLLVEGCTRDTVMVAIGGGVIGDMIGFVASTFMRGVRVVQVPTSLLAMVDSSIGGKTAIDTPLGKNFIGAFWQPKFVLVDIKWLETLAKREFINGMAEVIKTACIWNADEFTRLESNASLFLNVVNGAKNVKVTNQLTNEIDEISNTDIEAMLDHTYKLVLESIKVKAEVVSSDERESSLRNLLNFGHSIGHAYEAILTPQALHGECVSIGMVKEAELSRYFGILSPTQVARLSKILVAYGLPVSPDEKWFKELTLHKKTPLDILLKKMSIDKKNEGSKKKVVILESIGKCYGDSAQFVSDEDLRFILTDETLVYPFKDIPADQQKVVIPPGSKSISNRALILAALGEGQCKIKNLLHSDDTKHMLTAVHELKGATISWEDNGETVVVEGHGGSTLSACADPLYLGNAGTASRFLTSLAALVNSTSSQKYIVLTGNARMQQRPIAPLVDSLRANGTKIEYLNNEGSLPIKVYTDSVFKGGRIELAATVSSQYVSSILMCAPYAEEPVTLALVGGKPISKLYVDMTIKMMEKFGINVETSTTEPYTYYIPKGHYINPSEYVIESDASSATYPLAFAAMTGTTVTVPNIGFESLQGDARFARDVLKPMGCKITQTATSTTVSGPPVGTLKPLKHVDMEPMTDAFLTACVVAAISHDSDPNSANTTTIEGIANQRVKECNRILAMATELAKFGVKTTELPDGIQVHGLNSIKDLKVPSDSSGPVGVCTYDDHRVAMSFSLLAGMVNSQNERDEVANPVRILERHCTGKTWPGWWDVLHSELGAKLDGAEPLECTSKKNSKKSVVIIGMRAAGKTTISKWCASALGYKLVDLDELFEQQHNNQSVKQFVVENGWEKFREEETRIFKEVIQNYGDDGYVFSTGGGIVESAESRKALKDFASSGGYVLHLHRDIEETIVFLQSDPSRPAYVEEIREVWNRREGWYKECSNFSFFAPHCSAEAEFQALRRSFSKYIATITGVREIEIPSGRSAFVCLTFDDLTEQTENLTPICYGCEAVEVRVDHLANYSADFVSKQLSILRKATDSIPIIFTVRTMKQGGNFPDEEFKTLRELYDIALKNGVEFLDLELTLPTDIQYEVINKRGNTKIIGSHHDFQGLYSWDDAEWENRFNQALTLDVDVVKFVGTAVNFEDNLRLEHFRDTHKNKPLIAVNMTSKGSISRVLNNVLTPVTSDLLPNSAAPGQLTVAQINKMYTSMGGIEPKELFVVGKPIGHSRSPILHNTGYEILGLPHKFDKFETESAQLVKEKLLDGNKNFGGAAVTIPLKLDIMQYMDELTDAAKVIGAVNTVIPLGNKKFKGDNTDWLGIRNALINNGVPEYVGHTAGLVIGAGGTSRAALYALHSLGCKKIFIINRTTSKLKPLIESLPSEFNIIGIESTKSIEEIKEHVGVAVSCVPADKPLDDELLSKLERFLVKGAHAAFVPTLLEAAYKPSVTPVMTISQDKYQWHVVPGSQMLVHQGVAQFEKWTGFKGPFKAIFDAVTKE</sequence>
<comment type="function">
    <text>The AROM polypeptide catalyzes 5 consecutive enzymatic reactions in prechorismate polyaromatic amino acid biosynthesis.</text>
</comment>
<comment type="catalytic activity">
    <reaction evidence="1">
        <text>7-phospho-2-dehydro-3-deoxy-D-arabino-heptonate = 3-dehydroquinate + phosphate</text>
        <dbReference type="Rhea" id="RHEA:21968"/>
        <dbReference type="ChEBI" id="CHEBI:32364"/>
        <dbReference type="ChEBI" id="CHEBI:43474"/>
        <dbReference type="ChEBI" id="CHEBI:58394"/>
        <dbReference type="EC" id="4.2.3.4"/>
    </reaction>
</comment>
<comment type="catalytic activity">
    <reaction evidence="1">
        <text>3-dehydroquinate = 3-dehydroshikimate + H2O</text>
        <dbReference type="Rhea" id="RHEA:21096"/>
        <dbReference type="ChEBI" id="CHEBI:15377"/>
        <dbReference type="ChEBI" id="CHEBI:16630"/>
        <dbReference type="ChEBI" id="CHEBI:32364"/>
        <dbReference type="EC" id="4.2.1.10"/>
    </reaction>
</comment>
<comment type="catalytic activity">
    <reaction evidence="1">
        <text>shikimate + NADP(+) = 3-dehydroshikimate + NADPH + H(+)</text>
        <dbReference type="Rhea" id="RHEA:17737"/>
        <dbReference type="ChEBI" id="CHEBI:15378"/>
        <dbReference type="ChEBI" id="CHEBI:16630"/>
        <dbReference type="ChEBI" id="CHEBI:36208"/>
        <dbReference type="ChEBI" id="CHEBI:57783"/>
        <dbReference type="ChEBI" id="CHEBI:58349"/>
        <dbReference type="EC" id="1.1.1.25"/>
    </reaction>
</comment>
<comment type="catalytic activity">
    <reaction evidence="1">
        <text>shikimate + ATP = 3-phosphoshikimate + ADP + H(+)</text>
        <dbReference type="Rhea" id="RHEA:13121"/>
        <dbReference type="ChEBI" id="CHEBI:15378"/>
        <dbReference type="ChEBI" id="CHEBI:30616"/>
        <dbReference type="ChEBI" id="CHEBI:36208"/>
        <dbReference type="ChEBI" id="CHEBI:145989"/>
        <dbReference type="ChEBI" id="CHEBI:456216"/>
        <dbReference type="EC" id="2.7.1.71"/>
    </reaction>
</comment>
<comment type="catalytic activity">
    <reaction evidence="1">
        <text>3-phosphoshikimate + phosphoenolpyruvate = 5-O-(1-carboxyvinyl)-3-phosphoshikimate + phosphate</text>
        <dbReference type="Rhea" id="RHEA:21256"/>
        <dbReference type="ChEBI" id="CHEBI:43474"/>
        <dbReference type="ChEBI" id="CHEBI:57701"/>
        <dbReference type="ChEBI" id="CHEBI:58702"/>
        <dbReference type="ChEBI" id="CHEBI:145989"/>
        <dbReference type="EC" id="2.5.1.19"/>
    </reaction>
</comment>
<comment type="cofactor">
    <cofactor evidence="1">
        <name>Zn(2+)</name>
        <dbReference type="ChEBI" id="CHEBI:29105"/>
    </cofactor>
    <text evidence="1">Binds 2 Zn(2+) ions per subunit.</text>
</comment>
<comment type="pathway">
    <text evidence="1">Metabolic intermediate biosynthesis; chorismate biosynthesis; chorismate from D-erythrose 4-phosphate and phosphoenolpyruvate: step 2/7.</text>
</comment>
<comment type="pathway">
    <text evidence="1">Metabolic intermediate biosynthesis; chorismate biosynthesis; chorismate from D-erythrose 4-phosphate and phosphoenolpyruvate: step 3/7.</text>
</comment>
<comment type="pathway">
    <text evidence="1">Metabolic intermediate biosynthesis; chorismate biosynthesis; chorismate from D-erythrose 4-phosphate and phosphoenolpyruvate: step 4/7.</text>
</comment>
<comment type="pathway">
    <text evidence="1">Metabolic intermediate biosynthesis; chorismate biosynthesis; chorismate from D-erythrose 4-phosphate and phosphoenolpyruvate: step 5/7.</text>
</comment>
<comment type="pathway">
    <text evidence="1">Metabolic intermediate biosynthesis; chorismate biosynthesis; chorismate from D-erythrose 4-phosphate and phosphoenolpyruvate: step 6/7.</text>
</comment>
<comment type="subunit">
    <text evidence="1">Homodimer.</text>
</comment>
<comment type="interaction">
    <interactant intactId="EBI-2883">
        <id>P08566</id>
    </interactant>
    <interactant intactId="EBI-8666">
        <id>P15108</id>
        <label>HSC82</label>
    </interactant>
    <organismsDiffer>false</organismsDiffer>
    <experiments>3</experiments>
</comment>
<comment type="subcellular location">
    <subcellularLocation>
        <location>Cytoplasm</location>
    </subcellularLocation>
</comment>
<comment type="miscellaneous">
    <text evidence="2">Present with 6420 molecules/cell in log phase SD medium.</text>
</comment>
<comment type="similarity">
    <text evidence="1">In the N-terminal section; belongs to the sugar phosphate cyclases superfamily. Dehydroquinate synthase family.</text>
</comment>
<comment type="similarity">
    <text evidence="1">In the 2nd section; belongs to the EPSP synthase family.</text>
</comment>
<comment type="similarity">
    <text evidence="1">In the 3rd section; belongs to the shikimate kinase family.</text>
</comment>
<comment type="similarity">
    <text evidence="1">In the 4th section; belongs to the type-I 3-dehydroquinase family.</text>
</comment>
<comment type="similarity">
    <text evidence="1">In the C-terminal section; belongs to the shikimate dehydrogenase family.</text>
</comment>
<evidence type="ECO:0000255" key="1">
    <source>
        <dbReference type="HAMAP-Rule" id="MF_03143"/>
    </source>
</evidence>
<evidence type="ECO:0000269" key="2">
    <source>
    </source>
</evidence>